<dbReference type="EC" id="1.2.1.22"/>
<dbReference type="EMBL" id="L77117">
    <property type="protein sequence ID" value="AAB99418.1"/>
    <property type="molecule type" value="Genomic_DNA"/>
</dbReference>
<dbReference type="PIR" id="B64476">
    <property type="entry name" value="B64476"/>
</dbReference>
<dbReference type="RefSeq" id="WP_010870928.1">
    <property type="nucleotide sequence ID" value="NC_000909.1"/>
</dbReference>
<dbReference type="PDB" id="3PQA">
    <property type="method" value="X-ray"/>
    <property type="resolution" value="1.50 A"/>
    <property type="chains" value="A/B/C/D=1-463"/>
</dbReference>
<dbReference type="PDB" id="3RHD">
    <property type="method" value="X-ray"/>
    <property type="resolution" value="2.20 A"/>
    <property type="chains" value="A/B/C/D=1-463"/>
</dbReference>
<dbReference type="PDBsum" id="3PQA"/>
<dbReference type="PDBsum" id="3RHD"/>
<dbReference type="SMR" id="Q58806"/>
<dbReference type="FunCoup" id="Q58806">
    <property type="interactions" value="48"/>
</dbReference>
<dbReference type="STRING" id="243232.MJ_1411"/>
<dbReference type="PaxDb" id="243232-MJ_1411"/>
<dbReference type="EnsemblBacteria" id="AAB99418">
    <property type="protein sequence ID" value="AAB99418"/>
    <property type="gene ID" value="MJ_1411"/>
</dbReference>
<dbReference type="GeneID" id="1452314"/>
<dbReference type="KEGG" id="mja:MJ_1411"/>
<dbReference type="eggNOG" id="arCOG01252">
    <property type="taxonomic scope" value="Archaea"/>
</dbReference>
<dbReference type="HOGENOM" id="CLU_005391_1_0_2"/>
<dbReference type="InParanoid" id="Q58806"/>
<dbReference type="OrthoDB" id="6342at2157"/>
<dbReference type="PhylomeDB" id="Q58806"/>
<dbReference type="BioCyc" id="MetaCyc:MONOMER-12177"/>
<dbReference type="BRENDA" id="1.2.1.22">
    <property type="organism ID" value="3260"/>
</dbReference>
<dbReference type="SABIO-RK" id="Q58806"/>
<dbReference type="UniPathway" id="UPA00071"/>
<dbReference type="EvolutionaryTrace" id="Q58806"/>
<dbReference type="Proteomes" id="UP000000805">
    <property type="component" value="Chromosome"/>
</dbReference>
<dbReference type="GO" id="GO:0008911">
    <property type="term" value="F:lactaldehyde dehydrogenase (NAD+) activity"/>
    <property type="evidence" value="ECO:0000314"/>
    <property type="project" value="MENGO"/>
</dbReference>
<dbReference type="CDD" id="cd07094">
    <property type="entry name" value="ALDH_F21_LactADH-like"/>
    <property type="match status" value="1"/>
</dbReference>
<dbReference type="FunFam" id="3.40.309.10:FF:000018">
    <property type="entry name" value="Alpha-aminoadipic semialdehyde dehydrogenase"/>
    <property type="match status" value="1"/>
</dbReference>
<dbReference type="FunFam" id="3.40.605.10:FF:000007">
    <property type="entry name" value="NAD/NADP-dependent betaine aldehyde dehydrogenase"/>
    <property type="match status" value="1"/>
</dbReference>
<dbReference type="Gene3D" id="3.40.605.10">
    <property type="entry name" value="Aldehyde Dehydrogenase, Chain A, domain 1"/>
    <property type="match status" value="1"/>
</dbReference>
<dbReference type="Gene3D" id="3.40.309.10">
    <property type="entry name" value="Aldehyde Dehydrogenase, Chain A, domain 2"/>
    <property type="match status" value="1"/>
</dbReference>
<dbReference type="InterPro" id="IPR016161">
    <property type="entry name" value="Ald_DH/histidinol_DH"/>
</dbReference>
<dbReference type="InterPro" id="IPR016163">
    <property type="entry name" value="Ald_DH_C"/>
</dbReference>
<dbReference type="InterPro" id="IPR016162">
    <property type="entry name" value="Ald_DH_N"/>
</dbReference>
<dbReference type="InterPro" id="IPR015590">
    <property type="entry name" value="Aldehyde_DH_dom"/>
</dbReference>
<dbReference type="InterPro" id="IPR051020">
    <property type="entry name" value="ALDH-related_metabolic_enz"/>
</dbReference>
<dbReference type="InterPro" id="IPR053404">
    <property type="entry name" value="Lactaldehyde_DH"/>
</dbReference>
<dbReference type="NCBIfam" id="NF040648">
    <property type="entry name" value="lactal_redase_Meth"/>
    <property type="match status" value="1"/>
</dbReference>
<dbReference type="PANTHER" id="PTHR42991">
    <property type="entry name" value="ALDEHYDE DEHYDROGENASE"/>
    <property type="match status" value="1"/>
</dbReference>
<dbReference type="PANTHER" id="PTHR42991:SF1">
    <property type="entry name" value="ALDEHYDE DEHYDROGENASE"/>
    <property type="match status" value="1"/>
</dbReference>
<dbReference type="Pfam" id="PF00171">
    <property type="entry name" value="Aldedh"/>
    <property type="match status" value="1"/>
</dbReference>
<dbReference type="SUPFAM" id="SSF53720">
    <property type="entry name" value="ALDH-like"/>
    <property type="match status" value="1"/>
</dbReference>
<proteinExistence type="evidence at protein level"/>
<protein>
    <recommendedName>
        <fullName>Lactaldehyde dehydrogenase</fullName>
        <ecNumber>1.2.1.22</ecNumber>
    </recommendedName>
</protein>
<name>LADH_METJA</name>
<accession>Q58806</accession>
<comment type="function">
    <text evidence="2">Involved in F420 biosynthesis through the oxidation of lactaldehyde to lactate. The substrate preference order is propionaldehyde &gt; DL-lactaldehyde, DL-glyceraldehyde &gt; crotonaldehyde &gt; glycolaldehyde &gt; acetaldehyde, acrolein &gt; formaldehyde. No activity was observed towards methylglyoxal or glyceraldehyde-3-phosphate. Has a preference for NAD over NADP.</text>
</comment>
<comment type="catalytic activity">
    <reaction evidence="2">
        <text>(S)-lactaldehyde + NAD(+) + H2O = (S)-lactate + NADH + 2 H(+)</text>
        <dbReference type="Rhea" id="RHEA:14277"/>
        <dbReference type="ChEBI" id="CHEBI:15377"/>
        <dbReference type="ChEBI" id="CHEBI:15378"/>
        <dbReference type="ChEBI" id="CHEBI:16651"/>
        <dbReference type="ChEBI" id="CHEBI:18041"/>
        <dbReference type="ChEBI" id="CHEBI:57540"/>
        <dbReference type="ChEBI" id="CHEBI:57945"/>
        <dbReference type="EC" id="1.2.1.22"/>
    </reaction>
</comment>
<comment type="biophysicochemical properties">
    <kinetics>
        <KM evidence="2">284 uM for propionaldehyde (at pH 7.5)</KM>
        <KM evidence="2">302 uM for DL-lactaldehyde (at pH 7.5)</KM>
        <Vmax evidence="2">1.12 umol/min/mg enzyme with propionaldehyde as substrate (at pH 7.5)</Vmax>
        <Vmax evidence="2">0.6 umol/min/mg enzyme with DL-lactaldehyde as substrate (at pH 7.5)</Vmax>
        <text>As the lactaldehyde used was a mixture of D and L isomers, the kinetic parameters do not reflect the possible stereospecificity of the enzyme.</text>
    </kinetics>
    <phDependence>
        <text evidence="2">Optimum pH is 9. The activity remained constant to pH 10.0. Below pH 9, the activity gradually declined, and the enzyme was inactive at pH 6 or below.</text>
    </phDependence>
</comment>
<comment type="pathway">
    <text>Cofactor biosynthesis; coenzyme F420 biosynthesis.</text>
</comment>
<comment type="subunit">
    <text evidence="2">Homotetramer.</text>
</comment>
<comment type="similarity">
    <text evidence="3">Belongs to the aldehyde dehydrogenase family.</text>
</comment>
<sequence>MFIDGKWINREDMDVINPYSLEVIKKIPALSREEAKEAIDTAEKYKEVMKNLPITKRYNILMNIAKQIKEKKEELAKILAIDAGKPIKQARVEVERSIGTFKLAAFYVKEHRDEVIPSDDRLIFTRREPVGIVGAITPFNFPLNLSAHKIAPAIATGNVIVHHPSSKAPLVCIELAKIIENALKKYNVPLGVYNLLTGAGEVVGDEIVVNEKVNMISFTGSSKVGELITKKAGFKKIALELGGVNPNIVLKDADLNKAVNALIKGSFIYAGQVCISVGMILVDESIADKFIEMFVNKAKVLNVGNPLDEKTDVGPLISVEHAEWVEKVVEKAIDEGGKLLLGGKRDKALFYPTILEVDRDNILCKTETFAPVIPIIRTNEEEMIDIANSTEYGLHSAIFTNDINKSLKFAENLEFGGVVINDSSLFRQDNMPFGGVKKSGLGREGVKYAMEEMSNIKTIIISK</sequence>
<keyword id="KW-0002">3D-structure</keyword>
<keyword id="KW-0520">NAD</keyword>
<keyword id="KW-0560">Oxidoreductase</keyword>
<keyword id="KW-1185">Reference proteome</keyword>
<evidence type="ECO:0000250" key="1"/>
<evidence type="ECO:0000269" key="2">
    <source>
    </source>
</evidence>
<evidence type="ECO:0000305" key="3"/>
<evidence type="ECO:0007829" key="4">
    <source>
        <dbReference type="PDB" id="3PQA"/>
    </source>
</evidence>
<gene>
    <name type="ordered locus">MJ1411</name>
</gene>
<reference key="1">
    <citation type="journal article" date="1996" name="Science">
        <title>Complete genome sequence of the methanogenic archaeon, Methanococcus jannaschii.</title>
        <authorList>
            <person name="Bult C.J."/>
            <person name="White O."/>
            <person name="Olsen G.J."/>
            <person name="Zhou L."/>
            <person name="Fleischmann R.D."/>
            <person name="Sutton G.G."/>
            <person name="Blake J.A."/>
            <person name="FitzGerald L.M."/>
            <person name="Clayton R.A."/>
            <person name="Gocayne J.D."/>
            <person name="Kerlavage A.R."/>
            <person name="Dougherty B.A."/>
            <person name="Tomb J.-F."/>
            <person name="Adams M.D."/>
            <person name="Reich C.I."/>
            <person name="Overbeek R."/>
            <person name="Kirkness E.F."/>
            <person name="Weinstock K.G."/>
            <person name="Merrick J.M."/>
            <person name="Glodek A."/>
            <person name="Scott J.L."/>
            <person name="Geoghagen N.S.M."/>
            <person name="Weidman J.F."/>
            <person name="Fuhrmann J.L."/>
            <person name="Nguyen D."/>
            <person name="Utterback T.R."/>
            <person name="Kelley J.M."/>
            <person name="Peterson J.D."/>
            <person name="Sadow P.W."/>
            <person name="Hanna M.C."/>
            <person name="Cotton M.D."/>
            <person name="Roberts K.M."/>
            <person name="Hurst M.A."/>
            <person name="Kaine B.P."/>
            <person name="Borodovsky M."/>
            <person name="Klenk H.-P."/>
            <person name="Fraser C.M."/>
            <person name="Smith H.O."/>
            <person name="Woese C.R."/>
            <person name="Venter J.C."/>
        </authorList>
    </citation>
    <scope>NUCLEOTIDE SEQUENCE [LARGE SCALE GENOMIC DNA]</scope>
    <source>
        <strain>ATCC 43067 / DSM 2661 / JAL-1 / JCM 10045 / NBRC 100440</strain>
    </source>
</reference>
<reference key="2">
    <citation type="journal article" date="2006" name="J. Bacteriol.">
        <title>Identification of lactaldehyde dehydrogenase in Methanocaldococcus jannaschii and its involvement in production of lactate for F420 biosynthesis.</title>
        <authorList>
            <person name="Grochowski L.L."/>
            <person name="Xu H."/>
            <person name="White R.H."/>
        </authorList>
    </citation>
    <scope>FUNCTION IN F420 BIOSYNTHESIS</scope>
    <scope>CATALYTIC ACTIVITY</scope>
    <scope>SUBUNIT</scope>
    <scope>BIOPHYSICOCHEMICAL PROPERTIES</scope>
</reference>
<organism>
    <name type="scientific">Methanocaldococcus jannaschii (strain ATCC 43067 / DSM 2661 / JAL-1 / JCM 10045 / NBRC 100440)</name>
    <name type="common">Methanococcus jannaschii</name>
    <dbReference type="NCBI Taxonomy" id="243232"/>
    <lineage>
        <taxon>Archaea</taxon>
        <taxon>Methanobacteriati</taxon>
        <taxon>Methanobacteriota</taxon>
        <taxon>Methanomada group</taxon>
        <taxon>Methanococci</taxon>
        <taxon>Methanococcales</taxon>
        <taxon>Methanocaldococcaceae</taxon>
        <taxon>Methanocaldococcus</taxon>
    </lineage>
</organism>
<feature type="chain" id="PRO_0000056600" description="Lactaldehyde dehydrogenase">
    <location>
        <begin position="1"/>
        <end position="463"/>
    </location>
</feature>
<feature type="active site" evidence="1">
    <location>
        <position position="240"/>
    </location>
</feature>
<feature type="active site" evidence="1">
    <location>
        <position position="274"/>
    </location>
</feature>
<feature type="binding site" evidence="1">
    <location>
        <begin position="220"/>
        <end position="225"/>
    </location>
    <ligand>
        <name>NAD(+)</name>
        <dbReference type="ChEBI" id="CHEBI:57540"/>
    </ligand>
</feature>
<feature type="strand" evidence="4">
    <location>
        <begin position="13"/>
        <end position="16"/>
    </location>
</feature>
<feature type="turn" evidence="4">
    <location>
        <begin position="18"/>
        <end position="20"/>
    </location>
</feature>
<feature type="strand" evidence="4">
    <location>
        <begin position="23"/>
        <end position="27"/>
    </location>
</feature>
<feature type="helix" evidence="4">
    <location>
        <begin position="32"/>
        <end position="44"/>
    </location>
</feature>
<feature type="helix" evidence="4">
    <location>
        <begin position="46"/>
        <end position="50"/>
    </location>
</feature>
<feature type="helix" evidence="4">
    <location>
        <begin position="54"/>
        <end position="70"/>
    </location>
</feature>
<feature type="helix" evidence="4">
    <location>
        <begin position="72"/>
        <end position="83"/>
    </location>
</feature>
<feature type="helix" evidence="4">
    <location>
        <begin position="87"/>
        <end position="110"/>
    </location>
</feature>
<feature type="strand" evidence="4">
    <location>
        <begin position="113"/>
        <end position="116"/>
    </location>
</feature>
<feature type="strand" evidence="4">
    <location>
        <begin position="121"/>
        <end position="129"/>
    </location>
</feature>
<feature type="strand" evidence="4">
    <location>
        <begin position="131"/>
        <end position="137"/>
    </location>
</feature>
<feature type="strand" evidence="4">
    <location>
        <begin position="139"/>
        <end position="141"/>
    </location>
</feature>
<feature type="helix" evidence="4">
    <location>
        <begin position="142"/>
        <end position="155"/>
    </location>
</feature>
<feature type="strand" evidence="4">
    <location>
        <begin position="159"/>
        <end position="164"/>
    </location>
</feature>
<feature type="helix" evidence="4">
    <location>
        <begin position="170"/>
        <end position="185"/>
    </location>
</feature>
<feature type="helix" evidence="4">
    <location>
        <begin position="190"/>
        <end position="192"/>
    </location>
</feature>
<feature type="strand" evidence="4">
    <location>
        <begin position="193"/>
        <end position="195"/>
    </location>
</feature>
<feature type="turn" evidence="4">
    <location>
        <begin position="200"/>
        <end position="202"/>
    </location>
</feature>
<feature type="helix" evidence="4">
    <location>
        <begin position="203"/>
        <end position="209"/>
    </location>
</feature>
<feature type="strand" evidence="4">
    <location>
        <begin position="215"/>
        <end position="220"/>
    </location>
</feature>
<feature type="helix" evidence="4">
    <location>
        <begin position="222"/>
        <end position="231"/>
    </location>
</feature>
<feature type="strand" evidence="4">
    <location>
        <begin position="234"/>
        <end position="240"/>
    </location>
</feature>
<feature type="strand" evidence="4">
    <location>
        <begin position="245"/>
        <end position="249"/>
    </location>
</feature>
<feature type="helix" evidence="4">
    <location>
        <begin position="255"/>
        <end position="267"/>
    </location>
</feature>
<feature type="helix" evidence="4">
    <location>
        <begin position="268"/>
        <end position="271"/>
    </location>
</feature>
<feature type="strand" evidence="4">
    <location>
        <begin position="276"/>
        <end position="283"/>
    </location>
</feature>
<feature type="helix" evidence="4">
    <location>
        <begin position="284"/>
        <end position="286"/>
    </location>
</feature>
<feature type="helix" evidence="4">
    <location>
        <begin position="287"/>
        <end position="299"/>
    </location>
</feature>
<feature type="helix" evidence="4">
    <location>
        <begin position="319"/>
        <end position="334"/>
    </location>
</feature>
<feature type="strand" evidence="4">
    <location>
        <begin position="338"/>
        <end position="341"/>
    </location>
</feature>
<feature type="strand" evidence="4">
    <location>
        <begin position="353"/>
        <end position="356"/>
    </location>
</feature>
<feature type="helix" evidence="4">
    <location>
        <begin position="362"/>
        <end position="364"/>
    </location>
</feature>
<feature type="strand" evidence="4">
    <location>
        <begin position="370"/>
        <end position="378"/>
    </location>
</feature>
<feature type="helix" evidence="4">
    <location>
        <begin position="380"/>
        <end position="387"/>
    </location>
</feature>
<feature type="strand" evidence="4">
    <location>
        <begin position="394"/>
        <end position="399"/>
    </location>
</feature>
<feature type="helix" evidence="4">
    <location>
        <begin position="403"/>
        <end position="412"/>
    </location>
</feature>
<feature type="strand" evidence="4">
    <location>
        <begin position="415"/>
        <end position="422"/>
    </location>
</feature>
<feature type="helix" evidence="4">
    <location>
        <begin position="437"/>
        <end position="439"/>
    </location>
</feature>
<feature type="strand" evidence="4">
    <location>
        <begin position="440"/>
        <end position="442"/>
    </location>
</feature>
<feature type="helix" evidence="4">
    <location>
        <begin position="446"/>
        <end position="452"/>
    </location>
</feature>
<feature type="strand" evidence="4">
    <location>
        <begin position="454"/>
        <end position="462"/>
    </location>
</feature>